<comment type="function">
    <text evidence="1">Prohibitin probably acts as a holdase/unfoldase for the stabilization of newly synthesized mitochondrial proteins.</text>
</comment>
<comment type="subunit">
    <text evidence="6 7">Component of a prohibitin multimeric complex in mitochondrial membranes.</text>
</comment>
<comment type="subcellular location">
    <subcellularLocation>
        <location evidence="3 6 7 8">Mitochondrion inner membrane</location>
        <topology evidence="3 6 7 8">Single-pass type II membrane protein</topology>
    </subcellularLocation>
</comment>
<comment type="tissue specificity">
    <text evidence="5 6">Mostly expressed in proliferative tissues, including vasculature, shoot and root apical tissues. Accumulates in dry seeds.</text>
</comment>
<comment type="developmental stage">
    <text evidence="6">Observed in all organs primordia and meristems. In cotyledons, hypocotyls and differentiating leaves, present in stomatal meristemoid cells, guard mother cells and trichomes. Within the anthers, transiently expressed in the proximity of the sporogenous tissue. Accumulates in embryos at globular stages, except in suspensor cell. In root elongation zones, mostly present in epidermal cells, particularly in trichoblasts.</text>
</comment>
<comment type="induction">
    <text evidence="4 5">Transcripts levels decrease upon imbibition but remains stable at the protein level.</text>
</comment>
<comment type="similarity">
    <text evidence="9">Belongs to the prohibitin family.</text>
</comment>
<sequence length="279" mass="30638">MGSQQVAISFLTNLAKAAFGLGVAATALNSSLYTVDGGERAVLFDRFRGVLDQTVGEGTHFLIPYLQTPHIYDIRTKPHTFSSKSGTKDLQMVNLTLRVLFRPEVSRLPYIFQTLGLEYDEKVLPSIGNEVLKAVVANFNADQLLTERPQVSALVRDALIKRAREFNIELDDIAITHLSYGAEFSRAVEAKQVAQQEAERSKFVVMKADQERRAAVIRAEGESEAAQLISDATAKAGMGLIELRRIEASREVAATLARSPNVAYLPGGQSMLFNLNPGR</sequence>
<keyword id="KW-0007">Acetylation</keyword>
<keyword id="KW-0472">Membrane</keyword>
<keyword id="KW-0496">Mitochondrion</keyword>
<keyword id="KW-0999">Mitochondrion inner membrane</keyword>
<keyword id="KW-1185">Reference proteome</keyword>
<keyword id="KW-0735">Signal-anchor</keyword>
<keyword id="KW-0812">Transmembrane</keyword>
<keyword id="KW-1133">Transmembrane helix</keyword>
<accession>Q9LK25</accession>
<accession>Q84WL7</accession>
<accession>Q8LBC7</accession>
<feature type="initiator methionine" description="Removed" evidence="10">
    <location>
        <position position="1"/>
    </location>
</feature>
<feature type="chain" id="PRO_0000420599" description="Prohibitin-4, mitochondrial">
    <location>
        <begin position="2"/>
        <end position="279"/>
    </location>
</feature>
<feature type="topological domain" description="Mitochondrial matrix" evidence="2">
    <location>
        <begin position="2"/>
        <end position="6"/>
    </location>
</feature>
<feature type="transmembrane region" description="Helical; Signal-anchor for type II membrane protein" evidence="2">
    <location>
        <begin position="7"/>
        <end position="28"/>
    </location>
</feature>
<feature type="topological domain" description="Mitochondrial intermembrane" evidence="2">
    <location>
        <begin position="29"/>
        <end position="279"/>
    </location>
</feature>
<feature type="modified residue" description="N-acetylglycine" evidence="10">
    <location>
        <position position="2"/>
    </location>
</feature>
<feature type="sequence conflict" description="In Ref. 5; AAM64845." evidence="9" ref="5">
    <original>V</original>
    <variation>A</variation>
    <location>
        <position position="6"/>
    </location>
</feature>
<feature type="sequence conflict" description="In Ref. 3; AAO23637 and 4; BAE99598." evidence="9" ref="3 4">
    <original>K</original>
    <variation>E</variation>
    <location>
        <position position="133"/>
    </location>
</feature>
<feature type="sequence conflict" description="In Ref. 5; AAM64845." evidence="9" ref="5">
    <original>D</original>
    <variation>E</variation>
    <location>
        <position position="157"/>
    </location>
</feature>
<reference key="1">
    <citation type="journal article" date="2000" name="DNA Res.">
        <title>Structural analysis of Arabidopsis thaliana chromosome 3. II. Sequence features of the 4,251,695 bp regions covered by 90 P1, TAC and BAC clones.</title>
        <authorList>
            <person name="Kaneko T."/>
            <person name="Katoh T."/>
            <person name="Sato S."/>
            <person name="Nakamura Y."/>
            <person name="Asamizu E."/>
            <person name="Tabata S."/>
        </authorList>
    </citation>
    <scope>NUCLEOTIDE SEQUENCE [LARGE SCALE GENOMIC DNA]</scope>
    <source>
        <strain>cv. Columbia</strain>
    </source>
</reference>
<reference key="2">
    <citation type="journal article" date="2017" name="Plant J.">
        <title>Araport11: a complete reannotation of the Arabidopsis thaliana reference genome.</title>
        <authorList>
            <person name="Cheng C.Y."/>
            <person name="Krishnakumar V."/>
            <person name="Chan A.P."/>
            <person name="Thibaud-Nissen F."/>
            <person name="Schobel S."/>
            <person name="Town C.D."/>
        </authorList>
    </citation>
    <scope>GENOME REANNOTATION</scope>
    <source>
        <strain>cv. Columbia</strain>
    </source>
</reference>
<reference key="3">
    <citation type="journal article" date="2003" name="Science">
        <title>Empirical analysis of transcriptional activity in the Arabidopsis genome.</title>
        <authorList>
            <person name="Yamada K."/>
            <person name="Lim J."/>
            <person name="Dale J.M."/>
            <person name="Chen H."/>
            <person name="Shinn P."/>
            <person name="Palm C.J."/>
            <person name="Southwick A.M."/>
            <person name="Wu H.C."/>
            <person name="Kim C.J."/>
            <person name="Nguyen M."/>
            <person name="Pham P.K."/>
            <person name="Cheuk R.F."/>
            <person name="Karlin-Newmann G."/>
            <person name="Liu S.X."/>
            <person name="Lam B."/>
            <person name="Sakano H."/>
            <person name="Wu T."/>
            <person name="Yu G."/>
            <person name="Miranda M."/>
            <person name="Quach H.L."/>
            <person name="Tripp M."/>
            <person name="Chang C.H."/>
            <person name="Lee J.M."/>
            <person name="Toriumi M.J."/>
            <person name="Chan M.M."/>
            <person name="Tang C.C."/>
            <person name="Onodera C.S."/>
            <person name="Deng J.M."/>
            <person name="Akiyama K."/>
            <person name="Ansari Y."/>
            <person name="Arakawa T."/>
            <person name="Banh J."/>
            <person name="Banno F."/>
            <person name="Bowser L."/>
            <person name="Brooks S.Y."/>
            <person name="Carninci P."/>
            <person name="Chao Q."/>
            <person name="Choy N."/>
            <person name="Enju A."/>
            <person name="Goldsmith A.D."/>
            <person name="Gurjal M."/>
            <person name="Hansen N.F."/>
            <person name="Hayashizaki Y."/>
            <person name="Johnson-Hopson C."/>
            <person name="Hsuan V.W."/>
            <person name="Iida K."/>
            <person name="Karnes M."/>
            <person name="Khan S."/>
            <person name="Koesema E."/>
            <person name="Ishida J."/>
            <person name="Jiang P.X."/>
            <person name="Jones T."/>
            <person name="Kawai J."/>
            <person name="Kamiya A."/>
            <person name="Meyers C."/>
            <person name="Nakajima M."/>
            <person name="Narusaka M."/>
            <person name="Seki M."/>
            <person name="Sakurai T."/>
            <person name="Satou M."/>
            <person name="Tamse R."/>
            <person name="Vaysberg M."/>
            <person name="Wallender E.K."/>
            <person name="Wong C."/>
            <person name="Yamamura Y."/>
            <person name="Yuan S."/>
            <person name="Shinozaki K."/>
            <person name="Davis R.W."/>
            <person name="Theologis A."/>
            <person name="Ecker J.R."/>
        </authorList>
    </citation>
    <scope>NUCLEOTIDE SEQUENCE [LARGE SCALE MRNA]</scope>
    <source>
        <strain>cv. Columbia</strain>
    </source>
</reference>
<reference key="4">
    <citation type="submission" date="2006-07" db="EMBL/GenBank/DDBJ databases">
        <title>Large-scale analysis of RIKEN Arabidopsis full-length (RAFL) cDNAs.</title>
        <authorList>
            <person name="Totoki Y."/>
            <person name="Seki M."/>
            <person name="Ishida J."/>
            <person name="Nakajima M."/>
            <person name="Enju A."/>
            <person name="Kamiya A."/>
            <person name="Narusaka M."/>
            <person name="Shin-i T."/>
            <person name="Nakagawa M."/>
            <person name="Sakamoto N."/>
            <person name="Oishi K."/>
            <person name="Kohara Y."/>
            <person name="Kobayashi M."/>
            <person name="Toyoda A."/>
            <person name="Sakaki Y."/>
            <person name="Sakurai T."/>
            <person name="Iida K."/>
            <person name="Akiyama K."/>
            <person name="Satou M."/>
            <person name="Toyoda T."/>
            <person name="Konagaya A."/>
            <person name="Carninci P."/>
            <person name="Kawai J."/>
            <person name="Hayashizaki Y."/>
            <person name="Shinozaki K."/>
        </authorList>
    </citation>
    <scope>NUCLEOTIDE SEQUENCE [LARGE SCALE MRNA]</scope>
    <source>
        <strain>cv. Columbia</strain>
    </source>
</reference>
<reference key="5">
    <citation type="submission" date="2002-03" db="EMBL/GenBank/DDBJ databases">
        <title>Full-length cDNA from Arabidopsis thaliana.</title>
        <authorList>
            <person name="Brover V.V."/>
            <person name="Troukhan M.E."/>
            <person name="Alexandrov N.A."/>
            <person name="Lu Y.-P."/>
            <person name="Flavell R.B."/>
            <person name="Feldmann K.A."/>
        </authorList>
    </citation>
    <scope>NUCLEOTIDE SEQUENCE [LARGE SCALE MRNA]</scope>
</reference>
<reference key="6">
    <citation type="journal article" date="2004" name="Plant Cell">
        <title>Experimental analysis of the Arabidopsis mitochondrial proteome highlights signaling and regulatory components, provides assessment of targeting prediction programs, and indicates plant-specific mitochondrial proteins.</title>
        <authorList>
            <person name="Heazlewood J.L."/>
            <person name="Tonti-Filippini J.S."/>
            <person name="Gout A.M."/>
            <person name="Day D.A."/>
            <person name="Whelan J."/>
            <person name="Millar A.H."/>
        </authorList>
    </citation>
    <scope>IDENTIFICATION BY MASS SPECTROMETRY</scope>
    <scope>SUBCELLULAR LOCATION [LARGE SCALE ANALYSIS]</scope>
    <source>
        <strain>cv. Landsberg erecta</strain>
    </source>
</reference>
<reference key="7">
    <citation type="journal article" date="2006" name="J. Plant Physiol.">
        <title>cDNA-AFLP analysis of seed germination in Arabidopsis thaliana identifies transposons and new genomic sequences.</title>
        <authorList>
            <person name="de Diego J.G."/>
            <person name="David Rodriguez F."/>
            <person name="Rodriguez Lorenzo J.L."/>
            <person name="Grappin P."/>
            <person name="Cervantes E."/>
        </authorList>
    </citation>
    <scope>INDUCTION BY IMBIBITION</scope>
    <source>
        <strain>cv. Wassilewskija</strain>
    </source>
</reference>
<reference key="8">
    <citation type="journal article" date="2007" name="J. Plant Physiol.">
        <title>The prohibitin genes in Arabidopsis thaliana: expression in seeds, hormonal regulation and possible role in cell cycle control during seed germination.</title>
        <authorList>
            <person name="De Diego J.G."/>
            <person name="David Rodriguez F."/>
            <person name="Rodriguez Lorenzo J.L."/>
            <person name="Cervantes E."/>
        </authorList>
    </citation>
    <scope>TISSUE SPECIFICITY</scope>
    <scope>INDUCTION BY IMBIBITION</scope>
    <source>
        <strain>cv. Columbia</strain>
    </source>
</reference>
<reference key="9">
    <citation type="journal article" date="2007" name="Mol. Cell. Proteomics">
        <title>Multidimensional protein identification technology (MudPIT) analysis of ubiquitinated proteins in plants.</title>
        <authorList>
            <person name="Maor R."/>
            <person name="Jones A."/>
            <person name="Nuehse T.S."/>
            <person name="Studholme D.J."/>
            <person name="Peck S.C."/>
            <person name="Shirasu K."/>
        </authorList>
    </citation>
    <scope>IDENTIFICATION BY MASS SPECTROMETRY [LARGE SCALE ANALYSIS]</scope>
    <source>
        <strain>cv. Landsberg erecta</strain>
    </source>
</reference>
<reference key="10">
    <citation type="journal article" date="2007" name="Plant J.">
        <title>Mitochondrial type-I prohibitins of Arabidopsis thaliana are required for supporting proficient meristem development.</title>
        <authorList>
            <person name="Van Aken O."/>
            <person name="Pecenkova T."/>
            <person name="van de Cotte B."/>
            <person name="De Rycke R."/>
            <person name="Eeckhout D."/>
            <person name="Fromm H."/>
            <person name="De Jaeger G."/>
            <person name="Witters E."/>
            <person name="Beemster G.T.S."/>
            <person name="Inze D."/>
            <person name="Van Breusegem F."/>
        </authorList>
    </citation>
    <scope>TISSUE SPECIFICITY</scope>
    <scope>DEVELOPMENTAL STAGE</scope>
    <scope>SUBUNIT</scope>
    <scope>SUBCELLULAR LOCATION</scope>
    <scope>IDENTIFICATION BY MASS SPECTROMETRY</scope>
    <source>
        <strain>cv. Columbia</strain>
    </source>
</reference>
<reference key="11">
    <citation type="journal article" date="2008" name="J. Proteome Res.">
        <title>Resolving and identifying protein components of plant mitochondrial respiratory complexes using three dimensions of gel electrophoresis.</title>
        <authorList>
            <person name="Meyer E.H."/>
            <person name="Taylor N.L."/>
            <person name="Millar A.H."/>
        </authorList>
    </citation>
    <scope>IDENTIFICATION BY MASS SPECTROMETRY</scope>
    <scope>SUBCELLULAR LOCATION</scope>
    <scope>SUBUNIT</scope>
</reference>
<reference key="12">
    <citation type="journal article" date="2011" name="Plant Physiol.">
        <title>Defining the protein complex proteome of plant mitochondria.</title>
        <authorList>
            <person name="Klodmann J."/>
            <person name="Senkler M."/>
            <person name="Rode C."/>
            <person name="Braun H.-P."/>
        </authorList>
    </citation>
    <scope>IDENTIFICATION BY MASS SPECTROMETRY</scope>
    <scope>SUBCELLULAR LOCATION [LARGE SCALE ANALYSIS]</scope>
</reference>
<reference key="13">
    <citation type="journal article" date="2012" name="Mol. Cell. Proteomics">
        <title>Comparative large-scale characterisation of plant vs. mammal proteins reveals similar and idiosyncratic N-alpha acetylation features.</title>
        <authorList>
            <person name="Bienvenut W.V."/>
            <person name="Sumpton D."/>
            <person name="Martinez A."/>
            <person name="Lilla S."/>
            <person name="Espagne C."/>
            <person name="Meinnel T."/>
            <person name="Giglione C."/>
        </authorList>
    </citation>
    <scope>ACETYLATION [LARGE SCALE ANALYSIS] AT GLY-2</scope>
    <scope>CLEAVAGE OF INITIATOR METHIONINE [LARGE SCALE ANALYSIS]</scope>
    <scope>IDENTIFICATION BY MASS SPECTROMETRY [LARGE SCALE ANALYSIS]</scope>
</reference>
<protein>
    <recommendedName>
        <fullName>Prohibitin-4, mitochondrial</fullName>
        <shortName>Atphb4</shortName>
    </recommendedName>
</protein>
<evidence type="ECO:0000250" key="1"/>
<evidence type="ECO:0000255" key="2"/>
<evidence type="ECO:0000269" key="3">
    <source>
    </source>
</evidence>
<evidence type="ECO:0000269" key="4">
    <source>
    </source>
</evidence>
<evidence type="ECO:0000269" key="5">
    <source>
    </source>
</evidence>
<evidence type="ECO:0000269" key="6">
    <source>
    </source>
</evidence>
<evidence type="ECO:0000269" key="7">
    <source>
    </source>
</evidence>
<evidence type="ECO:0000269" key="8">
    <source>
    </source>
</evidence>
<evidence type="ECO:0000305" key="9"/>
<evidence type="ECO:0007744" key="10">
    <source>
    </source>
</evidence>
<organism>
    <name type="scientific">Arabidopsis thaliana</name>
    <name type="common">Mouse-ear cress</name>
    <dbReference type="NCBI Taxonomy" id="3702"/>
    <lineage>
        <taxon>Eukaryota</taxon>
        <taxon>Viridiplantae</taxon>
        <taxon>Streptophyta</taxon>
        <taxon>Embryophyta</taxon>
        <taxon>Tracheophyta</taxon>
        <taxon>Spermatophyta</taxon>
        <taxon>Magnoliopsida</taxon>
        <taxon>eudicotyledons</taxon>
        <taxon>Gunneridae</taxon>
        <taxon>Pentapetalae</taxon>
        <taxon>rosids</taxon>
        <taxon>malvids</taxon>
        <taxon>Brassicales</taxon>
        <taxon>Brassicaceae</taxon>
        <taxon>Camelineae</taxon>
        <taxon>Arabidopsis</taxon>
    </lineage>
</organism>
<gene>
    <name type="primary">PHB4</name>
    <name type="ordered locus">At3g27280</name>
    <name type="ORF">K17E12.10</name>
</gene>
<name>PHB4_ARATH</name>
<proteinExistence type="evidence at protein level"/>
<dbReference type="EMBL" id="AP000381">
    <property type="protein sequence ID" value="BAB02123.1"/>
    <property type="molecule type" value="Genomic_DNA"/>
</dbReference>
<dbReference type="EMBL" id="CP002686">
    <property type="protein sequence ID" value="AEE77287.1"/>
    <property type="molecule type" value="Genomic_DNA"/>
</dbReference>
<dbReference type="EMBL" id="CP002686">
    <property type="protein sequence ID" value="AEE77288.1"/>
    <property type="molecule type" value="Genomic_DNA"/>
</dbReference>
<dbReference type="EMBL" id="BT003072">
    <property type="protein sequence ID" value="AAO23637.1"/>
    <property type="molecule type" value="mRNA"/>
</dbReference>
<dbReference type="EMBL" id="AK227607">
    <property type="protein sequence ID" value="BAE99598.1"/>
    <property type="molecule type" value="mRNA"/>
</dbReference>
<dbReference type="EMBL" id="AY087293">
    <property type="protein sequence ID" value="AAM64845.1"/>
    <property type="molecule type" value="mRNA"/>
</dbReference>
<dbReference type="RefSeq" id="NP_189364.1">
    <property type="nucleotide sequence ID" value="NM_113642.4"/>
</dbReference>
<dbReference type="RefSeq" id="NP_974369.1">
    <property type="nucleotide sequence ID" value="NM_202640.2"/>
</dbReference>
<dbReference type="SMR" id="Q9LK25"/>
<dbReference type="BioGRID" id="7677">
    <property type="interactions" value="28"/>
</dbReference>
<dbReference type="FunCoup" id="Q9LK25">
    <property type="interactions" value="3199"/>
</dbReference>
<dbReference type="IntAct" id="Q9LK25">
    <property type="interactions" value="1"/>
</dbReference>
<dbReference type="STRING" id="3702.Q9LK25"/>
<dbReference type="iPTMnet" id="Q9LK25"/>
<dbReference type="PaxDb" id="3702-AT3G27280.2"/>
<dbReference type="ProteomicsDB" id="236346"/>
<dbReference type="EnsemblPlants" id="AT3G27280.1">
    <property type="protein sequence ID" value="AT3G27280.1"/>
    <property type="gene ID" value="AT3G27280"/>
</dbReference>
<dbReference type="EnsemblPlants" id="AT3G27280.2">
    <property type="protein sequence ID" value="AT3G27280.2"/>
    <property type="gene ID" value="AT3G27280"/>
</dbReference>
<dbReference type="GeneID" id="822347"/>
<dbReference type="Gramene" id="AT3G27280.1">
    <property type="protein sequence ID" value="AT3G27280.1"/>
    <property type="gene ID" value="AT3G27280"/>
</dbReference>
<dbReference type="Gramene" id="AT3G27280.2">
    <property type="protein sequence ID" value="AT3G27280.2"/>
    <property type="gene ID" value="AT3G27280"/>
</dbReference>
<dbReference type="KEGG" id="ath:AT3G27280"/>
<dbReference type="Araport" id="AT3G27280"/>
<dbReference type="TAIR" id="AT3G27280">
    <property type="gene designation" value="PHB4"/>
</dbReference>
<dbReference type="eggNOG" id="KOG3083">
    <property type="taxonomic scope" value="Eukaryota"/>
</dbReference>
<dbReference type="HOGENOM" id="CLU_047969_0_2_1"/>
<dbReference type="InParanoid" id="Q9LK25"/>
<dbReference type="OMA" id="LQTPHIY"/>
<dbReference type="OrthoDB" id="275637at2759"/>
<dbReference type="PhylomeDB" id="Q9LK25"/>
<dbReference type="CD-CODE" id="4299E36E">
    <property type="entry name" value="Nucleolus"/>
</dbReference>
<dbReference type="PRO" id="PR:Q9LK25"/>
<dbReference type="Proteomes" id="UP000006548">
    <property type="component" value="Chromosome 3"/>
</dbReference>
<dbReference type="ExpressionAtlas" id="Q9LK25">
    <property type="expression patterns" value="baseline and differential"/>
</dbReference>
<dbReference type="GO" id="GO:0005829">
    <property type="term" value="C:cytosol"/>
    <property type="evidence" value="ECO:0007005"/>
    <property type="project" value="TAIR"/>
</dbReference>
<dbReference type="GO" id="GO:0005743">
    <property type="term" value="C:mitochondrial inner membrane"/>
    <property type="evidence" value="ECO:0007669"/>
    <property type="project" value="UniProtKB-SubCell"/>
</dbReference>
<dbReference type="GO" id="GO:0005739">
    <property type="term" value="C:mitochondrion"/>
    <property type="evidence" value="ECO:0000314"/>
    <property type="project" value="TAIR"/>
</dbReference>
<dbReference type="GO" id="GO:0009505">
    <property type="term" value="C:plant-type cell wall"/>
    <property type="evidence" value="ECO:0007005"/>
    <property type="project" value="TAIR"/>
</dbReference>
<dbReference type="GO" id="GO:0000325">
    <property type="term" value="C:plant-type vacuole"/>
    <property type="evidence" value="ECO:0007005"/>
    <property type="project" value="TAIR"/>
</dbReference>
<dbReference type="GO" id="GO:0005886">
    <property type="term" value="C:plasma membrane"/>
    <property type="evidence" value="ECO:0007005"/>
    <property type="project" value="TAIR"/>
</dbReference>
<dbReference type="CDD" id="cd03401">
    <property type="entry name" value="SPFH_prohibitin"/>
    <property type="match status" value="1"/>
</dbReference>
<dbReference type="FunFam" id="3.30.479.30:FF:000001">
    <property type="entry name" value="Prohibitin 2"/>
    <property type="match status" value="1"/>
</dbReference>
<dbReference type="Gene3D" id="3.30.479.30">
    <property type="entry name" value="Band 7 domain"/>
    <property type="match status" value="1"/>
</dbReference>
<dbReference type="InterPro" id="IPR001107">
    <property type="entry name" value="Band_7"/>
</dbReference>
<dbReference type="InterPro" id="IPR036013">
    <property type="entry name" value="Band_7/SPFH_dom_sf"/>
</dbReference>
<dbReference type="InterPro" id="IPR000163">
    <property type="entry name" value="Prohibitin"/>
</dbReference>
<dbReference type="PANTHER" id="PTHR23222">
    <property type="entry name" value="PROHIBITIN"/>
    <property type="match status" value="1"/>
</dbReference>
<dbReference type="PANTHER" id="PTHR23222:SF0">
    <property type="entry name" value="PROHIBITIN 1"/>
    <property type="match status" value="1"/>
</dbReference>
<dbReference type="Pfam" id="PF01145">
    <property type="entry name" value="Band_7"/>
    <property type="match status" value="1"/>
</dbReference>
<dbReference type="PRINTS" id="PR00679">
    <property type="entry name" value="PROHIBITIN"/>
</dbReference>
<dbReference type="SMART" id="SM00244">
    <property type="entry name" value="PHB"/>
    <property type="match status" value="1"/>
</dbReference>
<dbReference type="SUPFAM" id="SSF117892">
    <property type="entry name" value="Band 7/SPFH domain"/>
    <property type="match status" value="1"/>
</dbReference>